<evidence type="ECO:0000255" key="1">
    <source>
        <dbReference type="HAMAP-Rule" id="MF_00080"/>
    </source>
</evidence>
<evidence type="ECO:0000256" key="2">
    <source>
        <dbReference type="SAM" id="MobiDB-lite"/>
    </source>
</evidence>
<dbReference type="EMBL" id="CP000139">
    <property type="protein sequence ID" value="ABR41660.1"/>
    <property type="molecule type" value="Genomic_DNA"/>
</dbReference>
<dbReference type="RefSeq" id="WP_005847112.1">
    <property type="nucleotide sequence ID" value="NZ_JANSWM010000087.1"/>
</dbReference>
<dbReference type="SMR" id="A6L7J6"/>
<dbReference type="STRING" id="435590.BVU_4058"/>
<dbReference type="PaxDb" id="435590-BVU_4058"/>
<dbReference type="GeneID" id="5305017"/>
<dbReference type="KEGG" id="bvu:BVU_4058"/>
<dbReference type="eggNOG" id="COG0290">
    <property type="taxonomic scope" value="Bacteria"/>
</dbReference>
<dbReference type="HOGENOM" id="CLU_054919_3_0_10"/>
<dbReference type="BioCyc" id="BVUL435590:G1G59-4197-MONOMER"/>
<dbReference type="Proteomes" id="UP000002861">
    <property type="component" value="Chromosome"/>
</dbReference>
<dbReference type="GO" id="GO:0005829">
    <property type="term" value="C:cytosol"/>
    <property type="evidence" value="ECO:0007669"/>
    <property type="project" value="TreeGrafter"/>
</dbReference>
<dbReference type="GO" id="GO:0016020">
    <property type="term" value="C:membrane"/>
    <property type="evidence" value="ECO:0007669"/>
    <property type="project" value="TreeGrafter"/>
</dbReference>
<dbReference type="GO" id="GO:0043022">
    <property type="term" value="F:ribosome binding"/>
    <property type="evidence" value="ECO:0007669"/>
    <property type="project" value="TreeGrafter"/>
</dbReference>
<dbReference type="GO" id="GO:0003743">
    <property type="term" value="F:translation initiation factor activity"/>
    <property type="evidence" value="ECO:0007669"/>
    <property type="project" value="UniProtKB-UniRule"/>
</dbReference>
<dbReference type="GO" id="GO:0032790">
    <property type="term" value="P:ribosome disassembly"/>
    <property type="evidence" value="ECO:0007669"/>
    <property type="project" value="TreeGrafter"/>
</dbReference>
<dbReference type="FunFam" id="3.10.20.80:FF:000001">
    <property type="entry name" value="Translation initiation factor IF-3"/>
    <property type="match status" value="1"/>
</dbReference>
<dbReference type="FunFam" id="3.30.110.10:FF:000001">
    <property type="entry name" value="Translation initiation factor IF-3"/>
    <property type="match status" value="1"/>
</dbReference>
<dbReference type="Gene3D" id="3.30.110.10">
    <property type="entry name" value="Translation initiation factor 3 (IF-3), C-terminal domain"/>
    <property type="match status" value="1"/>
</dbReference>
<dbReference type="Gene3D" id="3.10.20.80">
    <property type="entry name" value="Translation initiation factor 3 (IF-3), N-terminal domain"/>
    <property type="match status" value="1"/>
</dbReference>
<dbReference type="HAMAP" id="MF_00080">
    <property type="entry name" value="IF_3"/>
    <property type="match status" value="1"/>
</dbReference>
<dbReference type="InterPro" id="IPR036788">
    <property type="entry name" value="T_IF-3_C_sf"/>
</dbReference>
<dbReference type="InterPro" id="IPR036787">
    <property type="entry name" value="T_IF-3_N_sf"/>
</dbReference>
<dbReference type="InterPro" id="IPR019813">
    <property type="entry name" value="Translation_initiation_fac3_CS"/>
</dbReference>
<dbReference type="InterPro" id="IPR001288">
    <property type="entry name" value="Translation_initiation_fac_3"/>
</dbReference>
<dbReference type="InterPro" id="IPR019815">
    <property type="entry name" value="Translation_initiation_fac_3_C"/>
</dbReference>
<dbReference type="InterPro" id="IPR019814">
    <property type="entry name" value="Translation_initiation_fac_3_N"/>
</dbReference>
<dbReference type="NCBIfam" id="TIGR00168">
    <property type="entry name" value="infC"/>
    <property type="match status" value="1"/>
</dbReference>
<dbReference type="PANTHER" id="PTHR10938">
    <property type="entry name" value="TRANSLATION INITIATION FACTOR IF-3"/>
    <property type="match status" value="1"/>
</dbReference>
<dbReference type="PANTHER" id="PTHR10938:SF0">
    <property type="entry name" value="TRANSLATION INITIATION FACTOR IF-3, MITOCHONDRIAL"/>
    <property type="match status" value="1"/>
</dbReference>
<dbReference type="Pfam" id="PF00707">
    <property type="entry name" value="IF3_C"/>
    <property type="match status" value="1"/>
</dbReference>
<dbReference type="Pfam" id="PF05198">
    <property type="entry name" value="IF3_N"/>
    <property type="match status" value="1"/>
</dbReference>
<dbReference type="SUPFAM" id="SSF55200">
    <property type="entry name" value="Translation initiation factor IF3, C-terminal domain"/>
    <property type="match status" value="1"/>
</dbReference>
<dbReference type="SUPFAM" id="SSF54364">
    <property type="entry name" value="Translation initiation factor IF3, N-terminal domain"/>
    <property type="match status" value="1"/>
</dbReference>
<dbReference type="PROSITE" id="PS00938">
    <property type="entry name" value="IF3"/>
    <property type="match status" value="1"/>
</dbReference>
<feature type="chain" id="PRO_1000004528" description="Translation initiation factor IF-3">
    <location>
        <begin position="1"/>
        <end position="198"/>
    </location>
</feature>
<feature type="region of interest" description="Disordered" evidence="2">
    <location>
        <begin position="168"/>
        <end position="198"/>
    </location>
</feature>
<feature type="compositionally biased region" description="Basic and acidic residues" evidence="2">
    <location>
        <begin position="178"/>
        <end position="198"/>
    </location>
</feature>
<accession>A6L7J6</accession>
<name>IF3_PHOV8</name>
<comment type="function">
    <text evidence="1">IF-3 binds to the 30S ribosomal subunit and shifts the equilibrium between 70S ribosomes and their 50S and 30S subunits in favor of the free subunits, thus enhancing the availability of 30S subunits on which protein synthesis initiation begins.</text>
</comment>
<comment type="subunit">
    <text evidence="1">Monomer.</text>
</comment>
<comment type="subcellular location">
    <subcellularLocation>
        <location evidence="1">Cytoplasm</location>
    </subcellularLocation>
</comment>
<comment type="similarity">
    <text evidence="1">Belongs to the IF-3 family.</text>
</comment>
<organism>
    <name type="scientific">Phocaeicola vulgatus (strain ATCC 8482 / DSM 1447 / JCM 5826 / CCUG 4940 / NBRC 14291 / NCTC 11154)</name>
    <name type="common">Bacteroides vulgatus</name>
    <dbReference type="NCBI Taxonomy" id="435590"/>
    <lineage>
        <taxon>Bacteria</taxon>
        <taxon>Pseudomonadati</taxon>
        <taxon>Bacteroidota</taxon>
        <taxon>Bacteroidia</taxon>
        <taxon>Bacteroidales</taxon>
        <taxon>Bacteroidaceae</taxon>
        <taxon>Phocaeicola</taxon>
    </lineage>
</organism>
<sequence>MKNDSLKGQHRINEQIRAKEVRIVGDDVESAVYPIAQALKMAEDHEADLVEISPNAVPPVCRIIDYSKFLYQLKKRQKEQKAKQVKVNVKEIRFGPQTDDHDYNFKLKHAIGFLQDGDKVKAYVFFKGRSILFKEQGEVLLLRFANDLEEYAKVEQMPLLEGKRMTISLAPKKAGSPKKAETDTAKKENPKKAVETKE</sequence>
<proteinExistence type="inferred from homology"/>
<protein>
    <recommendedName>
        <fullName evidence="1">Translation initiation factor IF-3</fullName>
    </recommendedName>
</protein>
<reference key="1">
    <citation type="journal article" date="2007" name="PLoS Biol.">
        <title>Evolution of symbiotic bacteria in the distal human intestine.</title>
        <authorList>
            <person name="Xu J."/>
            <person name="Mahowald M.A."/>
            <person name="Ley R.E."/>
            <person name="Lozupone C.A."/>
            <person name="Hamady M."/>
            <person name="Martens E.C."/>
            <person name="Henrissat B."/>
            <person name="Coutinho P.M."/>
            <person name="Minx P."/>
            <person name="Latreille P."/>
            <person name="Cordum H."/>
            <person name="Van Brunt A."/>
            <person name="Kim K."/>
            <person name="Fulton R.S."/>
            <person name="Fulton L.A."/>
            <person name="Clifton S.W."/>
            <person name="Wilson R.K."/>
            <person name="Knight R.D."/>
            <person name="Gordon J.I."/>
        </authorList>
    </citation>
    <scope>NUCLEOTIDE SEQUENCE [LARGE SCALE GENOMIC DNA]</scope>
    <source>
        <strain>ATCC 8482 / DSM 1447 / JCM 5826 / CCUG 4940 / NBRC 14291 / NCTC 11154</strain>
    </source>
</reference>
<gene>
    <name evidence="1" type="primary">infC</name>
    <name type="ordered locus">BVU_4058</name>
</gene>
<keyword id="KW-0963">Cytoplasm</keyword>
<keyword id="KW-0396">Initiation factor</keyword>
<keyword id="KW-0648">Protein biosynthesis</keyword>